<feature type="chain" id="PRO_0000138912" description="Protease HtpX homolog">
    <location>
        <begin position="1"/>
        <end position="319"/>
    </location>
</feature>
<feature type="transmembrane region" description="Helical" evidence="1">
    <location>
        <begin position="3"/>
        <end position="23"/>
    </location>
</feature>
<feature type="transmembrane region" description="Helical" evidence="1">
    <location>
        <begin position="32"/>
        <end position="52"/>
    </location>
</feature>
<feature type="transmembrane region" description="Helical" evidence="1">
    <location>
        <begin position="146"/>
        <end position="166"/>
    </location>
</feature>
<feature type="transmembrane region" description="Helical" evidence="1">
    <location>
        <begin position="182"/>
        <end position="202"/>
    </location>
</feature>
<feature type="active site" evidence="1">
    <location>
        <position position="135"/>
    </location>
</feature>
<feature type="binding site" evidence="1">
    <location>
        <position position="134"/>
    </location>
    <ligand>
        <name>Zn(2+)</name>
        <dbReference type="ChEBI" id="CHEBI:29105"/>
        <note>catalytic</note>
    </ligand>
</feature>
<feature type="binding site" evidence="1">
    <location>
        <position position="138"/>
    </location>
    <ligand>
        <name>Zn(2+)</name>
        <dbReference type="ChEBI" id="CHEBI:29105"/>
        <note>catalytic</note>
    </ligand>
</feature>
<feature type="binding site" evidence="1">
    <location>
        <position position="210"/>
    </location>
    <ligand>
        <name>Zn(2+)</name>
        <dbReference type="ChEBI" id="CHEBI:29105"/>
        <note>catalytic</note>
    </ligand>
</feature>
<reference key="1">
    <citation type="journal article" date="1999" name="DNA Res.">
        <title>Complete genome sequence of an aerobic hyper-thermophilic crenarchaeon, Aeropyrum pernix K1.</title>
        <authorList>
            <person name="Kawarabayasi Y."/>
            <person name="Hino Y."/>
            <person name="Horikawa H."/>
            <person name="Yamazaki S."/>
            <person name="Haikawa Y."/>
            <person name="Jin-no K."/>
            <person name="Takahashi M."/>
            <person name="Sekine M."/>
            <person name="Baba S."/>
            <person name="Ankai A."/>
            <person name="Kosugi H."/>
            <person name="Hosoyama A."/>
            <person name="Fukui S."/>
            <person name="Nagai Y."/>
            <person name="Nishijima K."/>
            <person name="Nakazawa H."/>
            <person name="Takamiya M."/>
            <person name="Masuda S."/>
            <person name="Funahashi T."/>
            <person name="Tanaka T."/>
            <person name="Kudoh Y."/>
            <person name="Yamazaki J."/>
            <person name="Kushida N."/>
            <person name="Oguchi A."/>
            <person name="Aoki K."/>
            <person name="Kubota K."/>
            <person name="Nakamura Y."/>
            <person name="Nomura N."/>
            <person name="Sako Y."/>
            <person name="Kikuchi H."/>
        </authorList>
    </citation>
    <scope>NUCLEOTIDE SEQUENCE [LARGE SCALE GENOMIC DNA]</scope>
    <source>
        <strain>ATCC 700893 / DSM 11879 / JCM 9820 / NBRC 100138 / K1</strain>
    </source>
</reference>
<keyword id="KW-1003">Cell membrane</keyword>
<keyword id="KW-0378">Hydrolase</keyword>
<keyword id="KW-0472">Membrane</keyword>
<keyword id="KW-0479">Metal-binding</keyword>
<keyword id="KW-0482">Metalloprotease</keyword>
<keyword id="KW-0645">Protease</keyword>
<keyword id="KW-1185">Reference proteome</keyword>
<keyword id="KW-0812">Transmembrane</keyword>
<keyword id="KW-1133">Transmembrane helix</keyword>
<keyword id="KW-0862">Zinc</keyword>
<gene>
    <name evidence="1" type="primary">htpX</name>
    <name type="ordered locus">APE_1045.1</name>
</gene>
<evidence type="ECO:0000255" key="1">
    <source>
        <dbReference type="HAMAP-Rule" id="MF_00188"/>
    </source>
</evidence>
<name>HTPX_AERPE</name>
<organism>
    <name type="scientific">Aeropyrum pernix (strain ATCC 700893 / DSM 11879 / JCM 9820 / NBRC 100138 / K1)</name>
    <dbReference type="NCBI Taxonomy" id="272557"/>
    <lineage>
        <taxon>Archaea</taxon>
        <taxon>Thermoproteota</taxon>
        <taxon>Thermoprotei</taxon>
        <taxon>Desulfurococcales</taxon>
        <taxon>Desulfurococcaceae</taxon>
        <taxon>Aeropyrum</taxon>
    </lineage>
</organism>
<proteinExistence type="inferred from homology"/>
<protein>
    <recommendedName>
        <fullName evidence="1">Protease HtpX homolog</fullName>
        <ecNumber evidence="1">3.4.24.-</ecNumber>
    </recommendedName>
</protein>
<sequence>MGLTVLALIGGYIVVLGVAAWALDAFTGLSGTGVAFMLSLLALAMVLVQWLFSPYIINMVYRTREPLPGEEWIVAEVEQLARRSGLKPPKVVVSEMNMPNAFAYGSPIAGSYVAVTRGLLRLLPKDEVRAVLAHEVGHLKHRDVTVILALSLIPIAAFLIGRTLVWAGILGGGGGERRGNPMALVAVGAALLAAGMVFQLIVSHFNRLREYYADAHSALVTGSPRSLQRALARIHAAYEHNPHLVEEARSNEMASMLFIVAPLTSLTASPLVDVDYLVERLKEQETNPLVELFSTHPPVSKRLRFLDRLASRIGGIEHY</sequence>
<accession>Q9YD67</accession>
<comment type="cofactor">
    <cofactor evidence="1">
        <name>Zn(2+)</name>
        <dbReference type="ChEBI" id="CHEBI:29105"/>
    </cofactor>
    <text evidence="1">Binds 1 zinc ion per subunit.</text>
</comment>
<comment type="subcellular location">
    <subcellularLocation>
        <location evidence="1">Cell membrane</location>
        <topology evidence="1">Multi-pass membrane protein</topology>
    </subcellularLocation>
</comment>
<comment type="similarity">
    <text evidence="1">Belongs to the peptidase M48B family.</text>
</comment>
<dbReference type="EC" id="3.4.24.-" evidence="1"/>
<dbReference type="EMBL" id="BA000002">
    <property type="protein sequence ID" value="BAA80030.2"/>
    <property type="molecule type" value="Genomic_DNA"/>
</dbReference>
<dbReference type="PIR" id="F72703">
    <property type="entry name" value="F72703"/>
</dbReference>
<dbReference type="STRING" id="272557.APE_1045.1"/>
<dbReference type="EnsemblBacteria" id="BAA80030">
    <property type="protein sequence ID" value="BAA80030"/>
    <property type="gene ID" value="APE_1045.1"/>
</dbReference>
<dbReference type="KEGG" id="ape:APE_1045.1"/>
<dbReference type="eggNOG" id="arCOG01331">
    <property type="taxonomic scope" value="Archaea"/>
</dbReference>
<dbReference type="Proteomes" id="UP000002518">
    <property type="component" value="Chromosome"/>
</dbReference>
<dbReference type="GO" id="GO:0005886">
    <property type="term" value="C:plasma membrane"/>
    <property type="evidence" value="ECO:0007669"/>
    <property type="project" value="UniProtKB-SubCell"/>
</dbReference>
<dbReference type="GO" id="GO:0004222">
    <property type="term" value="F:metalloendopeptidase activity"/>
    <property type="evidence" value="ECO:0007669"/>
    <property type="project" value="UniProtKB-UniRule"/>
</dbReference>
<dbReference type="GO" id="GO:0008270">
    <property type="term" value="F:zinc ion binding"/>
    <property type="evidence" value="ECO:0007669"/>
    <property type="project" value="UniProtKB-UniRule"/>
</dbReference>
<dbReference type="GO" id="GO:0006508">
    <property type="term" value="P:proteolysis"/>
    <property type="evidence" value="ECO:0007669"/>
    <property type="project" value="UniProtKB-KW"/>
</dbReference>
<dbReference type="CDD" id="cd07338">
    <property type="entry name" value="M48B_HtpX_like"/>
    <property type="match status" value="1"/>
</dbReference>
<dbReference type="Gene3D" id="3.30.2010.10">
    <property type="entry name" value="Metalloproteases ('zincins'), catalytic domain"/>
    <property type="match status" value="1"/>
</dbReference>
<dbReference type="HAMAP" id="MF_00188">
    <property type="entry name" value="Pept_M48_protease_HtpX"/>
    <property type="match status" value="1"/>
</dbReference>
<dbReference type="InterPro" id="IPR050083">
    <property type="entry name" value="HtpX_protease"/>
</dbReference>
<dbReference type="InterPro" id="IPR022919">
    <property type="entry name" value="Pept_M48_protease_HtpX"/>
</dbReference>
<dbReference type="InterPro" id="IPR001915">
    <property type="entry name" value="Peptidase_M48"/>
</dbReference>
<dbReference type="NCBIfam" id="NF002322">
    <property type="entry name" value="PRK01265.1"/>
    <property type="match status" value="1"/>
</dbReference>
<dbReference type="PANTHER" id="PTHR43221">
    <property type="entry name" value="PROTEASE HTPX"/>
    <property type="match status" value="1"/>
</dbReference>
<dbReference type="PANTHER" id="PTHR43221:SF2">
    <property type="entry name" value="PROTEASE HTPX HOMOLOG"/>
    <property type="match status" value="1"/>
</dbReference>
<dbReference type="Pfam" id="PF01435">
    <property type="entry name" value="Peptidase_M48"/>
    <property type="match status" value="1"/>
</dbReference>